<protein>
    <recommendedName>
        <fullName evidence="1">Serine hydroxymethyltransferase</fullName>
        <shortName evidence="1">SHMT</shortName>
        <shortName evidence="1">Serine methylase</shortName>
        <ecNumber evidence="1">2.1.2.1</ecNumber>
    </recommendedName>
</protein>
<dbReference type="EC" id="2.1.2.1" evidence="1"/>
<dbReference type="EMBL" id="CP000672">
    <property type="protein sequence ID" value="ABR00439.1"/>
    <property type="molecule type" value="Genomic_DNA"/>
</dbReference>
<dbReference type="SMR" id="A5UI33"/>
<dbReference type="KEGG" id="hiq:CGSHiGG_07995"/>
<dbReference type="HOGENOM" id="CLU_022477_2_1_6"/>
<dbReference type="UniPathway" id="UPA00193"/>
<dbReference type="UniPathway" id="UPA00288">
    <property type="reaction ID" value="UER01023"/>
</dbReference>
<dbReference type="Proteomes" id="UP000001990">
    <property type="component" value="Chromosome"/>
</dbReference>
<dbReference type="GO" id="GO:0005829">
    <property type="term" value="C:cytosol"/>
    <property type="evidence" value="ECO:0007669"/>
    <property type="project" value="TreeGrafter"/>
</dbReference>
<dbReference type="GO" id="GO:0004372">
    <property type="term" value="F:glycine hydroxymethyltransferase activity"/>
    <property type="evidence" value="ECO:0007669"/>
    <property type="project" value="UniProtKB-UniRule"/>
</dbReference>
<dbReference type="GO" id="GO:0030170">
    <property type="term" value="F:pyridoxal phosphate binding"/>
    <property type="evidence" value="ECO:0007669"/>
    <property type="project" value="UniProtKB-UniRule"/>
</dbReference>
<dbReference type="GO" id="GO:0019264">
    <property type="term" value="P:glycine biosynthetic process from serine"/>
    <property type="evidence" value="ECO:0007669"/>
    <property type="project" value="UniProtKB-UniRule"/>
</dbReference>
<dbReference type="GO" id="GO:0035999">
    <property type="term" value="P:tetrahydrofolate interconversion"/>
    <property type="evidence" value="ECO:0007669"/>
    <property type="project" value="UniProtKB-UniRule"/>
</dbReference>
<dbReference type="CDD" id="cd00378">
    <property type="entry name" value="SHMT"/>
    <property type="match status" value="1"/>
</dbReference>
<dbReference type="FunFam" id="3.40.640.10:FF:000001">
    <property type="entry name" value="Serine hydroxymethyltransferase"/>
    <property type="match status" value="1"/>
</dbReference>
<dbReference type="FunFam" id="3.90.1150.10:FF:000003">
    <property type="entry name" value="Serine hydroxymethyltransferase"/>
    <property type="match status" value="1"/>
</dbReference>
<dbReference type="Gene3D" id="3.90.1150.10">
    <property type="entry name" value="Aspartate Aminotransferase, domain 1"/>
    <property type="match status" value="1"/>
</dbReference>
<dbReference type="Gene3D" id="3.40.640.10">
    <property type="entry name" value="Type I PLP-dependent aspartate aminotransferase-like (Major domain)"/>
    <property type="match status" value="1"/>
</dbReference>
<dbReference type="HAMAP" id="MF_00051">
    <property type="entry name" value="SHMT"/>
    <property type="match status" value="1"/>
</dbReference>
<dbReference type="InterPro" id="IPR015424">
    <property type="entry name" value="PyrdxlP-dep_Trfase"/>
</dbReference>
<dbReference type="InterPro" id="IPR015421">
    <property type="entry name" value="PyrdxlP-dep_Trfase_major"/>
</dbReference>
<dbReference type="InterPro" id="IPR015422">
    <property type="entry name" value="PyrdxlP-dep_Trfase_small"/>
</dbReference>
<dbReference type="InterPro" id="IPR001085">
    <property type="entry name" value="Ser_HO-MeTrfase"/>
</dbReference>
<dbReference type="InterPro" id="IPR049943">
    <property type="entry name" value="Ser_HO-MeTrfase-like"/>
</dbReference>
<dbReference type="InterPro" id="IPR019798">
    <property type="entry name" value="Ser_HO-MeTrfase_PLP_BS"/>
</dbReference>
<dbReference type="InterPro" id="IPR039429">
    <property type="entry name" value="SHMT-like_dom"/>
</dbReference>
<dbReference type="NCBIfam" id="NF000586">
    <property type="entry name" value="PRK00011.1"/>
    <property type="match status" value="1"/>
</dbReference>
<dbReference type="PANTHER" id="PTHR11680">
    <property type="entry name" value="SERINE HYDROXYMETHYLTRANSFERASE"/>
    <property type="match status" value="1"/>
</dbReference>
<dbReference type="PANTHER" id="PTHR11680:SF50">
    <property type="entry name" value="SERINE HYDROXYMETHYLTRANSFERASE"/>
    <property type="match status" value="1"/>
</dbReference>
<dbReference type="Pfam" id="PF00464">
    <property type="entry name" value="SHMT"/>
    <property type="match status" value="1"/>
</dbReference>
<dbReference type="PIRSF" id="PIRSF000412">
    <property type="entry name" value="SHMT"/>
    <property type="match status" value="1"/>
</dbReference>
<dbReference type="SUPFAM" id="SSF53383">
    <property type="entry name" value="PLP-dependent transferases"/>
    <property type="match status" value="1"/>
</dbReference>
<dbReference type="PROSITE" id="PS00096">
    <property type="entry name" value="SHMT"/>
    <property type="match status" value="1"/>
</dbReference>
<reference key="1">
    <citation type="journal article" date="2007" name="Genome Biol.">
        <title>Characterization and modeling of the Haemophilus influenzae core and supragenomes based on the complete genomic sequences of Rd and 12 clinical nontypeable strains.</title>
        <authorList>
            <person name="Hogg J.S."/>
            <person name="Hu F.Z."/>
            <person name="Janto B."/>
            <person name="Boissy R."/>
            <person name="Hayes J."/>
            <person name="Keefe R."/>
            <person name="Post J.C."/>
            <person name="Ehrlich G.D."/>
        </authorList>
    </citation>
    <scope>NUCLEOTIDE SEQUENCE [LARGE SCALE GENOMIC DNA]</scope>
    <source>
        <strain>PittGG</strain>
    </source>
</reference>
<feature type="chain" id="PRO_1000006259" description="Serine hydroxymethyltransferase">
    <location>
        <begin position="1"/>
        <end position="421"/>
    </location>
</feature>
<feature type="binding site" evidence="1">
    <location>
        <position position="121"/>
    </location>
    <ligand>
        <name>(6S)-5,6,7,8-tetrahydrofolate</name>
        <dbReference type="ChEBI" id="CHEBI:57453"/>
    </ligand>
</feature>
<feature type="binding site" evidence="1">
    <location>
        <begin position="125"/>
        <end position="127"/>
    </location>
    <ligand>
        <name>(6S)-5,6,7,8-tetrahydrofolate</name>
        <dbReference type="ChEBI" id="CHEBI:57453"/>
    </ligand>
</feature>
<feature type="site" description="Plays an important role in substrate specificity" evidence="1">
    <location>
        <position position="228"/>
    </location>
</feature>
<feature type="modified residue" description="N6-(pyridoxal phosphate)lysine" evidence="1">
    <location>
        <position position="229"/>
    </location>
</feature>
<keyword id="KW-0028">Amino-acid biosynthesis</keyword>
<keyword id="KW-0963">Cytoplasm</keyword>
<keyword id="KW-0554">One-carbon metabolism</keyword>
<keyword id="KW-0663">Pyridoxal phosphate</keyword>
<keyword id="KW-0808">Transferase</keyword>
<organism>
    <name type="scientific">Haemophilus influenzae (strain PittGG)</name>
    <dbReference type="NCBI Taxonomy" id="374931"/>
    <lineage>
        <taxon>Bacteria</taxon>
        <taxon>Pseudomonadati</taxon>
        <taxon>Pseudomonadota</taxon>
        <taxon>Gammaproteobacteria</taxon>
        <taxon>Pasteurellales</taxon>
        <taxon>Pasteurellaceae</taxon>
        <taxon>Haemophilus</taxon>
    </lineage>
</organism>
<accession>A5UI33</accession>
<gene>
    <name evidence="1" type="primary">glyA</name>
    <name type="ordered locus">CGSHiGG_07995</name>
</gene>
<comment type="function">
    <text evidence="1">Catalyzes the reversible interconversion of serine and glycine with tetrahydrofolate (THF) serving as the one-carbon carrier. This reaction serves as the major source of one-carbon groups required for the biosynthesis of purines, thymidylate, methionine, and other important biomolecules. Also exhibits THF-independent aldolase activity toward beta-hydroxyamino acids, producing glycine and aldehydes, via a retro-aldol mechanism.</text>
</comment>
<comment type="catalytic activity">
    <reaction evidence="1">
        <text>(6R)-5,10-methylene-5,6,7,8-tetrahydrofolate + glycine + H2O = (6S)-5,6,7,8-tetrahydrofolate + L-serine</text>
        <dbReference type="Rhea" id="RHEA:15481"/>
        <dbReference type="ChEBI" id="CHEBI:15377"/>
        <dbReference type="ChEBI" id="CHEBI:15636"/>
        <dbReference type="ChEBI" id="CHEBI:33384"/>
        <dbReference type="ChEBI" id="CHEBI:57305"/>
        <dbReference type="ChEBI" id="CHEBI:57453"/>
        <dbReference type="EC" id="2.1.2.1"/>
    </reaction>
</comment>
<comment type="cofactor">
    <cofactor evidence="1">
        <name>pyridoxal 5'-phosphate</name>
        <dbReference type="ChEBI" id="CHEBI:597326"/>
    </cofactor>
</comment>
<comment type="pathway">
    <text evidence="1">One-carbon metabolism; tetrahydrofolate interconversion.</text>
</comment>
<comment type="pathway">
    <text evidence="1">Amino-acid biosynthesis; glycine biosynthesis; glycine from L-serine: step 1/1.</text>
</comment>
<comment type="subunit">
    <text evidence="1">Homodimer.</text>
</comment>
<comment type="subcellular location">
    <subcellularLocation>
        <location evidence="1">Cytoplasm</location>
    </subcellularLocation>
</comment>
<comment type="similarity">
    <text evidence="1">Belongs to the SHMT family.</text>
</comment>
<proteinExistence type="inferred from homology"/>
<evidence type="ECO:0000255" key="1">
    <source>
        <dbReference type="HAMAP-Rule" id="MF_00051"/>
    </source>
</evidence>
<sequence length="421" mass="45976">MFTRNMTIADYDPVLWQAIQDENRRQEEHIELIASENYASPRVMEAQGSQFTNKYAEGYPGKRYYGGCEYADIVEQLAIDRAKELFGADYVNVQPHSGSQANAAVYGALINAGDTILGMDLAHGGHLTHGAKVSFSGKIYNSVLYGITADGLIDYEDVRQKALECKPKLIVAGFSAYSQVVDWAKMREIADEVGAYLFVDMAHVAGLIAAGLYPNPLPHAHVVTTTTHKTLGGPRGGLILSSCGDEEIYKKLQSSVFPANQGGPLVHIIAAKAVCFKEALEPQYKEYQANVIKNAKAMVEVFKQRGYDVVSNGTENHLFLVSFIKQGLTGKAADAALGKANITVNKNAVPNDPQKPFVTSGIRVGTPSVTRRGFNENDVRELAGWMCDVLDALGKENEEQVIAETKEKVLAICKRLPVYPK</sequence>
<name>GLYA_HAEIG</name>